<dbReference type="EMBL" id="U14003">
    <property type="protein sequence ID" value="AAA97236.1"/>
    <property type="molecule type" value="Genomic_DNA"/>
</dbReference>
<dbReference type="EMBL" id="U00096">
    <property type="protein sequence ID" value="AAC77296.1"/>
    <property type="molecule type" value="Genomic_DNA"/>
</dbReference>
<dbReference type="EMBL" id="AP009048">
    <property type="protein sequence ID" value="BAE78332.1"/>
    <property type="molecule type" value="Genomic_DNA"/>
</dbReference>
<dbReference type="PIR" id="S56565">
    <property type="entry name" value="S56565"/>
</dbReference>
<dbReference type="RefSeq" id="NP_418760.1">
    <property type="nucleotide sequence ID" value="NC_000913.3"/>
</dbReference>
<dbReference type="RefSeq" id="WP_000199300.1">
    <property type="nucleotide sequence ID" value="NZ_LN832404.1"/>
</dbReference>
<dbReference type="SMR" id="P39389"/>
<dbReference type="BioGRID" id="4261620">
    <property type="interactions" value="106"/>
</dbReference>
<dbReference type="FunCoup" id="P39389">
    <property type="interactions" value="408"/>
</dbReference>
<dbReference type="IntAct" id="P39389">
    <property type="interactions" value="4"/>
</dbReference>
<dbReference type="STRING" id="511145.b4340"/>
<dbReference type="PaxDb" id="511145-b4340"/>
<dbReference type="EnsemblBacteria" id="AAC77296">
    <property type="protein sequence ID" value="AAC77296"/>
    <property type="gene ID" value="b4340"/>
</dbReference>
<dbReference type="GeneID" id="949089"/>
<dbReference type="KEGG" id="ecj:JW4303"/>
<dbReference type="KEGG" id="eco:b4340"/>
<dbReference type="KEGG" id="ecoc:C3026_23455"/>
<dbReference type="PATRIC" id="fig|1411691.4.peg.2346"/>
<dbReference type="EchoBASE" id="EB2466"/>
<dbReference type="eggNOG" id="COG1167">
    <property type="taxonomic scope" value="Bacteria"/>
</dbReference>
<dbReference type="HOGENOM" id="CLU_017584_0_0_6"/>
<dbReference type="InParanoid" id="P39389"/>
<dbReference type="OMA" id="TQGYPPL"/>
<dbReference type="OrthoDB" id="9804020at2"/>
<dbReference type="PhylomeDB" id="P39389"/>
<dbReference type="BioCyc" id="EcoCyc:G7936-MONOMER"/>
<dbReference type="PRO" id="PR:P39389"/>
<dbReference type="Proteomes" id="UP000000625">
    <property type="component" value="Chromosome"/>
</dbReference>
<dbReference type="GO" id="GO:0003677">
    <property type="term" value="F:DNA binding"/>
    <property type="evidence" value="ECO:0007669"/>
    <property type="project" value="UniProtKB-KW"/>
</dbReference>
<dbReference type="GO" id="GO:0003700">
    <property type="term" value="F:DNA-binding transcription factor activity"/>
    <property type="evidence" value="ECO:0007669"/>
    <property type="project" value="InterPro"/>
</dbReference>
<dbReference type="GO" id="GO:0030170">
    <property type="term" value="F:pyridoxal phosphate binding"/>
    <property type="evidence" value="ECO:0007669"/>
    <property type="project" value="InterPro"/>
</dbReference>
<dbReference type="GO" id="GO:0008483">
    <property type="term" value="F:transaminase activity"/>
    <property type="evidence" value="ECO:0000318"/>
    <property type="project" value="GO_Central"/>
</dbReference>
<dbReference type="GO" id="GO:1901605">
    <property type="term" value="P:alpha-amino acid metabolic process"/>
    <property type="evidence" value="ECO:0000318"/>
    <property type="project" value="GO_Central"/>
</dbReference>
<dbReference type="GO" id="GO:0009058">
    <property type="term" value="P:biosynthetic process"/>
    <property type="evidence" value="ECO:0007669"/>
    <property type="project" value="InterPro"/>
</dbReference>
<dbReference type="CDD" id="cd00609">
    <property type="entry name" value="AAT_like"/>
    <property type="match status" value="1"/>
</dbReference>
<dbReference type="CDD" id="cd07377">
    <property type="entry name" value="WHTH_GntR"/>
    <property type="match status" value="1"/>
</dbReference>
<dbReference type="FunFam" id="1.10.10.10:FF:000401">
    <property type="entry name" value="GntR family transcriptional regulator"/>
    <property type="match status" value="1"/>
</dbReference>
<dbReference type="FunFam" id="3.40.640.10:FF:000023">
    <property type="entry name" value="Transcriptional regulator, GntR family"/>
    <property type="match status" value="1"/>
</dbReference>
<dbReference type="Gene3D" id="3.90.1150.10">
    <property type="entry name" value="Aspartate Aminotransferase, domain 1"/>
    <property type="match status" value="1"/>
</dbReference>
<dbReference type="Gene3D" id="3.40.640.10">
    <property type="entry name" value="Type I PLP-dependent aspartate aminotransferase-like (Major domain)"/>
    <property type="match status" value="1"/>
</dbReference>
<dbReference type="Gene3D" id="1.10.10.10">
    <property type="entry name" value="Winged helix-like DNA-binding domain superfamily/Winged helix DNA-binding domain"/>
    <property type="match status" value="1"/>
</dbReference>
<dbReference type="InterPro" id="IPR004839">
    <property type="entry name" value="Aminotransferase_I/II_large"/>
</dbReference>
<dbReference type="InterPro" id="IPR051446">
    <property type="entry name" value="HTH_trans_reg/aminotransferase"/>
</dbReference>
<dbReference type="InterPro" id="IPR015424">
    <property type="entry name" value="PyrdxlP-dep_Trfase"/>
</dbReference>
<dbReference type="InterPro" id="IPR015421">
    <property type="entry name" value="PyrdxlP-dep_Trfase_major"/>
</dbReference>
<dbReference type="InterPro" id="IPR015422">
    <property type="entry name" value="PyrdxlP-dep_Trfase_small"/>
</dbReference>
<dbReference type="InterPro" id="IPR000524">
    <property type="entry name" value="Tscrpt_reg_HTH_GntR"/>
</dbReference>
<dbReference type="InterPro" id="IPR036388">
    <property type="entry name" value="WH-like_DNA-bd_sf"/>
</dbReference>
<dbReference type="InterPro" id="IPR036390">
    <property type="entry name" value="WH_DNA-bd_sf"/>
</dbReference>
<dbReference type="PANTHER" id="PTHR46577">
    <property type="entry name" value="HTH-TYPE TRANSCRIPTIONAL REGULATORY PROTEIN GABR"/>
    <property type="match status" value="1"/>
</dbReference>
<dbReference type="PANTHER" id="PTHR46577:SF2">
    <property type="entry name" value="TRANSCRIPTIONAL REGULATORY PROTEIN"/>
    <property type="match status" value="1"/>
</dbReference>
<dbReference type="Pfam" id="PF00155">
    <property type="entry name" value="Aminotran_1_2"/>
    <property type="match status" value="1"/>
</dbReference>
<dbReference type="Pfam" id="PF00392">
    <property type="entry name" value="GntR"/>
    <property type="match status" value="1"/>
</dbReference>
<dbReference type="SMART" id="SM00345">
    <property type="entry name" value="HTH_GNTR"/>
    <property type="match status" value="1"/>
</dbReference>
<dbReference type="SUPFAM" id="SSF53383">
    <property type="entry name" value="PLP-dependent transferases"/>
    <property type="match status" value="1"/>
</dbReference>
<dbReference type="SUPFAM" id="SSF46785">
    <property type="entry name" value="Winged helix' DNA-binding domain"/>
    <property type="match status" value="1"/>
</dbReference>
<dbReference type="PROSITE" id="PS50949">
    <property type="entry name" value="HTH_GNTR"/>
    <property type="match status" value="1"/>
</dbReference>
<feature type="chain" id="PRO_0000050709" description="Uncharacterized HTH-type transcriptional regulator YjiR">
    <location>
        <begin position="1"/>
        <end position="470"/>
    </location>
</feature>
<feature type="domain" description="HTH gntR-type" evidence="2">
    <location>
        <begin position="1"/>
        <end position="69"/>
    </location>
</feature>
<feature type="modified residue" description="N6-(pyridoxal phosphate)lysine" evidence="1">
    <location>
        <position position="313"/>
    </location>
</feature>
<sequence>MTRYQHLATLLAERIEQGLYRHGEKLPSVRSLSQEHGVSISTVQQAYQTLETMKLITPQPRSGYFVAQRKAQPPVPPMTRPVQRPVEITQWDQVLDMLEAHSDSSIVPLSKSTPDVEAPSLKPLWRELSRVVQHNLQTVLGYDLLAGQRVLREQIARLMLDSGSVVTADDIIITSGCHNSMSLALMAVCKPGDIVAVESPCYYGSMQMLRGMGVKVIEIPTDPETGISVEALELALEQWPIKGIILVPNCNNPLGFIMPDARKRAVLSLAQRHDIVIFEDDVYGELATEYPRPRTIHSWDIDGRVLLCSSFSKSIAPGLRVGWVAPGRYHDKLMHMKYAISSFNVPSTQMAAATFVLEGHYHRHIRRMRQIYQRNLALYTCWIREYFPCEICITRPKGGFLLWIELPEQVDMVCVARQLCRMKIQVAAGSIFSASGKYRNCLRINCALPLSETYREALKQIGEAVYRAME</sequence>
<accession>P39389</accession>
<accession>Q2M5X4</accession>
<keyword id="KW-0032">Aminotransferase</keyword>
<keyword id="KW-0238">DNA-binding</keyword>
<keyword id="KW-0663">Pyridoxal phosphate</keyword>
<keyword id="KW-1185">Reference proteome</keyword>
<keyword id="KW-0804">Transcription</keyword>
<keyword id="KW-0805">Transcription regulation</keyword>
<keyword id="KW-0808">Transferase</keyword>
<proteinExistence type="inferred from homology"/>
<gene>
    <name type="primary">yjiR</name>
    <name type="ordered locus">b4340</name>
    <name type="ordered locus">JW4303</name>
</gene>
<name>YJIR_ECOLI</name>
<organism>
    <name type="scientific">Escherichia coli (strain K12)</name>
    <dbReference type="NCBI Taxonomy" id="83333"/>
    <lineage>
        <taxon>Bacteria</taxon>
        <taxon>Pseudomonadati</taxon>
        <taxon>Pseudomonadota</taxon>
        <taxon>Gammaproteobacteria</taxon>
        <taxon>Enterobacterales</taxon>
        <taxon>Enterobacteriaceae</taxon>
        <taxon>Escherichia</taxon>
    </lineage>
</organism>
<protein>
    <recommendedName>
        <fullName>Uncharacterized HTH-type transcriptional regulator YjiR</fullName>
    </recommendedName>
</protein>
<reference key="1">
    <citation type="journal article" date="1995" name="Nucleic Acids Res.">
        <title>Analysis of the Escherichia coli genome VI: DNA sequence of the region from 92.8 through 100 minutes.</title>
        <authorList>
            <person name="Burland V.D."/>
            <person name="Plunkett G. III"/>
            <person name="Sofia H.J."/>
            <person name="Daniels D.L."/>
            <person name="Blattner F.R."/>
        </authorList>
    </citation>
    <scope>NUCLEOTIDE SEQUENCE [LARGE SCALE GENOMIC DNA]</scope>
    <source>
        <strain>K12 / MG1655 / ATCC 47076</strain>
    </source>
</reference>
<reference key="2">
    <citation type="journal article" date="1997" name="Science">
        <title>The complete genome sequence of Escherichia coli K-12.</title>
        <authorList>
            <person name="Blattner F.R."/>
            <person name="Plunkett G. III"/>
            <person name="Bloch C.A."/>
            <person name="Perna N.T."/>
            <person name="Burland V."/>
            <person name="Riley M."/>
            <person name="Collado-Vides J."/>
            <person name="Glasner J.D."/>
            <person name="Rode C.K."/>
            <person name="Mayhew G.F."/>
            <person name="Gregor J."/>
            <person name="Davis N.W."/>
            <person name="Kirkpatrick H.A."/>
            <person name="Goeden M.A."/>
            <person name="Rose D.J."/>
            <person name="Mau B."/>
            <person name="Shao Y."/>
        </authorList>
    </citation>
    <scope>NUCLEOTIDE SEQUENCE [LARGE SCALE GENOMIC DNA]</scope>
    <source>
        <strain>K12 / MG1655 / ATCC 47076</strain>
    </source>
</reference>
<reference key="3">
    <citation type="journal article" date="2006" name="Mol. Syst. Biol.">
        <title>Highly accurate genome sequences of Escherichia coli K-12 strains MG1655 and W3110.</title>
        <authorList>
            <person name="Hayashi K."/>
            <person name="Morooka N."/>
            <person name="Yamamoto Y."/>
            <person name="Fujita K."/>
            <person name="Isono K."/>
            <person name="Choi S."/>
            <person name="Ohtsubo E."/>
            <person name="Baba T."/>
            <person name="Wanner B.L."/>
            <person name="Mori H."/>
            <person name="Horiuchi T."/>
        </authorList>
    </citation>
    <scope>NUCLEOTIDE SEQUENCE [LARGE SCALE GENOMIC DNA]</scope>
    <source>
        <strain>K12 / W3110 / ATCC 27325 / DSM 5911</strain>
    </source>
</reference>
<comment type="similarity">
    <text evidence="3">In the C-terminal section; belongs to the class-I pyridoxal-phosphate-dependent aminotransferase family.</text>
</comment>
<evidence type="ECO:0000250" key="1"/>
<evidence type="ECO:0000255" key="2">
    <source>
        <dbReference type="PROSITE-ProRule" id="PRU00307"/>
    </source>
</evidence>
<evidence type="ECO:0000305" key="3"/>